<organism>
    <name type="scientific">Atropa belladonna</name>
    <name type="common">Belladonna</name>
    <name type="synonym">Deadly nightshade</name>
    <dbReference type="NCBI Taxonomy" id="33113"/>
    <lineage>
        <taxon>Eukaryota</taxon>
        <taxon>Viridiplantae</taxon>
        <taxon>Streptophyta</taxon>
        <taxon>Embryophyta</taxon>
        <taxon>Tracheophyta</taxon>
        <taxon>Spermatophyta</taxon>
        <taxon>Magnoliopsida</taxon>
        <taxon>eudicotyledons</taxon>
        <taxon>Gunneridae</taxon>
        <taxon>Pentapetalae</taxon>
        <taxon>asterids</taxon>
        <taxon>lamiids</taxon>
        <taxon>Solanales</taxon>
        <taxon>Solanaceae</taxon>
        <taxon>Solanoideae</taxon>
        <taxon>Hyoscyameae</taxon>
        <taxon>Atropa</taxon>
    </lineage>
</organism>
<gene>
    <name evidence="2" type="primary">psbH</name>
</gene>
<protein>
    <recommendedName>
        <fullName evidence="2">Photosystem II reaction center protein H</fullName>
        <shortName evidence="2">PSII-H</shortName>
    </recommendedName>
    <alternativeName>
        <fullName evidence="2">Photosystem II 10 kDa phosphoprotein</fullName>
    </alternativeName>
</protein>
<name>PSBH_ATRBE</name>
<accession>Q7FNS3</accession>
<feature type="initiator methionine" description="Removed" evidence="1">
    <location>
        <position position="1"/>
    </location>
</feature>
<feature type="chain" id="PRO_0000070499" description="Photosystem II reaction center protein H">
    <location>
        <begin position="2"/>
        <end position="73"/>
    </location>
</feature>
<feature type="transmembrane region" description="Helical" evidence="2">
    <location>
        <begin position="41"/>
        <end position="61"/>
    </location>
</feature>
<feature type="region of interest" description="Disordered" evidence="3">
    <location>
        <begin position="1"/>
        <end position="20"/>
    </location>
</feature>
<feature type="compositionally biased region" description="Polar residues" evidence="3">
    <location>
        <begin position="1"/>
        <end position="12"/>
    </location>
</feature>
<feature type="modified residue" description="Phosphothreonine" evidence="2">
    <location>
        <position position="3"/>
    </location>
</feature>
<feature type="modified residue" description="Phosphothreonine" evidence="2">
    <location>
        <position position="5"/>
    </location>
</feature>
<sequence>MATQTVENSSRSGPRRTAVGDLLKPLNSEYGKVAPGWGTTPLMGVAMALFAVFLSIILEIYNSSVLLDGISMN</sequence>
<evidence type="ECO:0000250" key="1">
    <source>
        <dbReference type="UniProtKB" id="P56780"/>
    </source>
</evidence>
<evidence type="ECO:0000255" key="2">
    <source>
        <dbReference type="HAMAP-Rule" id="MF_00752"/>
    </source>
</evidence>
<evidence type="ECO:0000256" key="3">
    <source>
        <dbReference type="SAM" id="MobiDB-lite"/>
    </source>
</evidence>
<dbReference type="EMBL" id="AJ316582">
    <property type="protein sequence ID" value="CAC88073.1"/>
    <property type="molecule type" value="Genomic_DNA"/>
</dbReference>
<dbReference type="RefSeq" id="NP_783260.1">
    <property type="nucleotide sequence ID" value="NC_004561.1"/>
</dbReference>
<dbReference type="SMR" id="Q7FNS3"/>
<dbReference type="GeneID" id="806551"/>
<dbReference type="GO" id="GO:0009535">
    <property type="term" value="C:chloroplast thylakoid membrane"/>
    <property type="evidence" value="ECO:0007669"/>
    <property type="project" value="UniProtKB-SubCell"/>
</dbReference>
<dbReference type="GO" id="GO:0009523">
    <property type="term" value="C:photosystem II"/>
    <property type="evidence" value="ECO:0007669"/>
    <property type="project" value="UniProtKB-KW"/>
</dbReference>
<dbReference type="GO" id="GO:0042301">
    <property type="term" value="F:phosphate ion binding"/>
    <property type="evidence" value="ECO:0007669"/>
    <property type="project" value="InterPro"/>
</dbReference>
<dbReference type="GO" id="GO:0015979">
    <property type="term" value="P:photosynthesis"/>
    <property type="evidence" value="ECO:0007669"/>
    <property type="project" value="UniProtKB-UniRule"/>
</dbReference>
<dbReference type="GO" id="GO:0050821">
    <property type="term" value="P:protein stabilization"/>
    <property type="evidence" value="ECO:0007669"/>
    <property type="project" value="InterPro"/>
</dbReference>
<dbReference type="FunFam" id="1.20.5.880:FF:000001">
    <property type="entry name" value="Photosystem II reaction center protein H"/>
    <property type="match status" value="1"/>
</dbReference>
<dbReference type="Gene3D" id="1.20.5.880">
    <property type="entry name" value="Photosystem II reaction center protein H"/>
    <property type="match status" value="1"/>
</dbReference>
<dbReference type="HAMAP" id="MF_00752">
    <property type="entry name" value="PSII_PsbH"/>
    <property type="match status" value="1"/>
</dbReference>
<dbReference type="InterPro" id="IPR001056">
    <property type="entry name" value="PSII_PsbH"/>
</dbReference>
<dbReference type="InterPro" id="IPR036863">
    <property type="entry name" value="PSII_PsbH_sf"/>
</dbReference>
<dbReference type="NCBIfam" id="NF002728">
    <property type="entry name" value="PRK02624.1"/>
    <property type="match status" value="1"/>
</dbReference>
<dbReference type="PANTHER" id="PTHR34469">
    <property type="entry name" value="PHOTOSYSTEM II REACTION CENTER PROTEIN H"/>
    <property type="match status" value="1"/>
</dbReference>
<dbReference type="PANTHER" id="PTHR34469:SF4">
    <property type="entry name" value="PHOTOSYSTEM II REACTION CENTER PROTEIN H"/>
    <property type="match status" value="1"/>
</dbReference>
<dbReference type="Pfam" id="PF00737">
    <property type="entry name" value="PsbH"/>
    <property type="match status" value="1"/>
</dbReference>
<dbReference type="SUPFAM" id="SSF161025">
    <property type="entry name" value="Photosystem II 10 kDa phosphoprotein PsbH"/>
    <property type="match status" value="1"/>
</dbReference>
<geneLocation type="chloroplast"/>
<reference key="1">
    <citation type="journal article" date="2002" name="Mol. Biol. Evol.">
        <title>The plastid chromosome of Atropa belladonna and its comparison with that of Nicotiana tabacum: the role of RNA editing in generating divergence in the process of plant speciation.</title>
        <authorList>
            <person name="Schmitz-Linneweber C."/>
            <person name="Regel R."/>
            <person name="Du T.G."/>
            <person name="Hupfer H."/>
            <person name="Herrmann R.G."/>
            <person name="Maier R.M."/>
        </authorList>
    </citation>
    <scope>NUCLEOTIDE SEQUENCE [LARGE SCALE GENOMIC DNA]</scope>
    <source>
        <strain>cv. Ab5p(kan)</strain>
    </source>
</reference>
<proteinExistence type="inferred from homology"/>
<keyword id="KW-0150">Chloroplast</keyword>
<keyword id="KW-0472">Membrane</keyword>
<keyword id="KW-0597">Phosphoprotein</keyword>
<keyword id="KW-0602">Photosynthesis</keyword>
<keyword id="KW-0604">Photosystem II</keyword>
<keyword id="KW-0934">Plastid</keyword>
<keyword id="KW-0793">Thylakoid</keyword>
<keyword id="KW-0812">Transmembrane</keyword>
<keyword id="KW-1133">Transmembrane helix</keyword>
<comment type="function">
    <text evidence="2">One of the components of the core complex of photosystem II (PSII), required for its stability and/or assembly. PSII is a light-driven water:plastoquinone oxidoreductase that uses light energy to abstract electrons from H(2)O, generating O(2) and a proton gradient subsequently used for ATP formation. It consists of a core antenna complex that captures photons, and an electron transfer chain that converts photonic excitation into a charge separation.</text>
</comment>
<comment type="subunit">
    <text evidence="2">PSII is composed of 1 copy each of membrane proteins PsbA, PsbB, PsbC, PsbD, PsbE, PsbF, PsbH, PsbI, PsbJ, PsbK, PsbL, PsbM, PsbT, PsbX, PsbY, PsbZ, Psb30/Ycf12, at least 3 peripheral proteins of the oxygen-evolving complex and a large number of cofactors. It forms dimeric complexes.</text>
</comment>
<comment type="subcellular location">
    <subcellularLocation>
        <location evidence="2">Plastid</location>
        <location evidence="2">Chloroplast thylakoid membrane</location>
        <topology evidence="2">Single-pass membrane protein</topology>
    </subcellularLocation>
</comment>
<comment type="PTM">
    <text evidence="2">Phosphorylation is a light-dependent reaction catalyzed by a membrane-bound kinase; phosphorylation occurs on Thr residue(s) in the N-terminus of the protein.</text>
</comment>
<comment type="similarity">
    <text evidence="2">Belongs to the PsbH family.</text>
</comment>